<name>WHIA_LEIXX</name>
<reference key="1">
    <citation type="journal article" date="2004" name="Mol. Plant Microbe Interact.">
        <title>The genome sequence of the Gram-positive sugarcane pathogen Leifsonia xyli subsp. xyli.</title>
        <authorList>
            <person name="Monteiro-Vitorello C.B."/>
            <person name="Camargo L.E.A."/>
            <person name="Van Sluys M.A."/>
            <person name="Kitajima J.P."/>
            <person name="Truffi D."/>
            <person name="do Amaral A.M."/>
            <person name="Harakava R."/>
            <person name="de Oliveira J.C.F."/>
            <person name="Wood D."/>
            <person name="de Oliveira M.C."/>
            <person name="Miyaki C.Y."/>
            <person name="Takita M.A."/>
            <person name="da Silva A.C.R."/>
            <person name="Furlan L.R."/>
            <person name="Carraro D.M."/>
            <person name="Camarotte G."/>
            <person name="Almeida N.F. Jr."/>
            <person name="Carrer H."/>
            <person name="Coutinho L.L."/>
            <person name="El-Dorry H.A."/>
            <person name="Ferro M.I.T."/>
            <person name="Gagliardi P.R."/>
            <person name="Giglioti E."/>
            <person name="Goldman M.H.S."/>
            <person name="Goldman G.H."/>
            <person name="Kimura E.T."/>
            <person name="Ferro E.S."/>
            <person name="Kuramae E.E."/>
            <person name="Lemos E.G.M."/>
            <person name="Lemos M.V.F."/>
            <person name="Mauro S.M.Z."/>
            <person name="Machado M.A."/>
            <person name="Marino C.L."/>
            <person name="Menck C.F."/>
            <person name="Nunes L.R."/>
            <person name="Oliveira R.C."/>
            <person name="Pereira G.G."/>
            <person name="Siqueira W."/>
            <person name="de Souza A.A."/>
            <person name="Tsai S.M."/>
            <person name="Zanca A.S."/>
            <person name="Simpson A.J.G."/>
            <person name="Brumbley S.M."/>
            <person name="Setubal J.C."/>
        </authorList>
    </citation>
    <scope>NUCLEOTIDE SEQUENCE [LARGE SCALE GENOMIC DNA]</scope>
    <source>
        <strain>CTCB07</strain>
    </source>
</reference>
<comment type="function">
    <text evidence="1">Involved in cell division and chromosome segregation.</text>
</comment>
<comment type="similarity">
    <text evidence="1">Belongs to the WhiA family.</text>
</comment>
<dbReference type="EMBL" id="AE016822">
    <property type="protein sequence ID" value="AAT88998.1"/>
    <property type="molecule type" value="Genomic_DNA"/>
</dbReference>
<dbReference type="RefSeq" id="WP_011185994.1">
    <property type="nucleotide sequence ID" value="NC_006087.1"/>
</dbReference>
<dbReference type="SMR" id="Q6AF47"/>
<dbReference type="STRING" id="281090.Lxx11500"/>
<dbReference type="KEGG" id="lxx:Lxx11500"/>
<dbReference type="eggNOG" id="COG1481">
    <property type="taxonomic scope" value="Bacteria"/>
</dbReference>
<dbReference type="HOGENOM" id="CLU_053282_0_0_11"/>
<dbReference type="Proteomes" id="UP000001306">
    <property type="component" value="Chromosome"/>
</dbReference>
<dbReference type="GO" id="GO:0003677">
    <property type="term" value="F:DNA binding"/>
    <property type="evidence" value="ECO:0007669"/>
    <property type="project" value="UniProtKB-UniRule"/>
</dbReference>
<dbReference type="GO" id="GO:0051301">
    <property type="term" value="P:cell division"/>
    <property type="evidence" value="ECO:0007669"/>
    <property type="project" value="UniProtKB-UniRule"/>
</dbReference>
<dbReference type="GO" id="GO:0043937">
    <property type="term" value="P:regulation of sporulation"/>
    <property type="evidence" value="ECO:0007669"/>
    <property type="project" value="InterPro"/>
</dbReference>
<dbReference type="FunFam" id="3.10.28.10:FF:000001">
    <property type="entry name" value="Probable cell division protein WhiA"/>
    <property type="match status" value="1"/>
</dbReference>
<dbReference type="Gene3D" id="3.10.28.10">
    <property type="entry name" value="Homing endonucleases"/>
    <property type="match status" value="1"/>
</dbReference>
<dbReference type="HAMAP" id="MF_01420">
    <property type="entry name" value="HTH_type_WhiA"/>
    <property type="match status" value="1"/>
</dbReference>
<dbReference type="InterPro" id="IPR027434">
    <property type="entry name" value="Homing_endonucl"/>
</dbReference>
<dbReference type="InterPro" id="IPR018478">
    <property type="entry name" value="Sporu_reg_WhiA_N_dom"/>
</dbReference>
<dbReference type="InterPro" id="IPR003802">
    <property type="entry name" value="Sporulation_regulator_WhiA"/>
</dbReference>
<dbReference type="InterPro" id="IPR023054">
    <property type="entry name" value="Sporulation_regulator_WhiA_C"/>
</dbReference>
<dbReference type="InterPro" id="IPR039518">
    <property type="entry name" value="WhiA_LAGLIDADG_dom"/>
</dbReference>
<dbReference type="NCBIfam" id="TIGR00647">
    <property type="entry name" value="DNA_bind_WhiA"/>
    <property type="match status" value="1"/>
</dbReference>
<dbReference type="PANTHER" id="PTHR37307">
    <property type="entry name" value="CELL DIVISION PROTEIN WHIA-RELATED"/>
    <property type="match status" value="1"/>
</dbReference>
<dbReference type="PANTHER" id="PTHR37307:SF1">
    <property type="entry name" value="CELL DIVISION PROTEIN WHIA-RELATED"/>
    <property type="match status" value="1"/>
</dbReference>
<dbReference type="Pfam" id="PF02650">
    <property type="entry name" value="HTH_WhiA"/>
    <property type="match status" value="1"/>
</dbReference>
<dbReference type="Pfam" id="PF14527">
    <property type="entry name" value="LAGLIDADG_WhiA"/>
    <property type="match status" value="1"/>
</dbReference>
<dbReference type="Pfam" id="PF10298">
    <property type="entry name" value="WhiA_N"/>
    <property type="match status" value="1"/>
</dbReference>
<proteinExistence type="inferred from homology"/>
<evidence type="ECO:0000255" key="1">
    <source>
        <dbReference type="HAMAP-Rule" id="MF_01420"/>
    </source>
</evidence>
<gene>
    <name evidence="1" type="primary">whiA</name>
    <name type="ordered locus">Lxx11500</name>
</gene>
<keyword id="KW-0131">Cell cycle</keyword>
<keyword id="KW-0132">Cell division</keyword>
<keyword id="KW-0238">DNA-binding</keyword>
<keyword id="KW-1185">Reference proteome</keyword>
<sequence length="326" mass="35047">MALTADVKDELTKVEVSKTTVRAAELATILRFSGGLHLIGGRIAVESELDTPELARRVRKDLAELYGVRGVVSVISTSGVRRASQYLVRVLDGGETLARQTGLLDAHRRPIRGLPNRLTTGSREELAAVWRGAFLASGSLTDPGRSAALEVTCPGNEAAMALVGAAGRIGVAAKAREVRGVHRVVIRDGEAISAMLVQMGAAQTVSNWEELRQRREVRATANRLVNFDDANLRRSAQAAVAACARVERALEILGDDIPEHLQYAGRLRLAHRDASLDELGHYADPPMTKDAVAGRIRRLLAMADKRASDLGVPSTEASLPADFDEV</sequence>
<feature type="chain" id="PRO_0000376511" description="Probable cell division protein WhiA">
    <location>
        <begin position="1"/>
        <end position="326"/>
    </location>
</feature>
<feature type="DNA-binding region" description="H-T-H motif" evidence="1">
    <location>
        <begin position="275"/>
        <end position="308"/>
    </location>
</feature>
<protein>
    <recommendedName>
        <fullName evidence="1">Probable cell division protein WhiA</fullName>
    </recommendedName>
</protein>
<organism>
    <name type="scientific">Leifsonia xyli subsp. xyli (strain CTCB07)</name>
    <dbReference type="NCBI Taxonomy" id="281090"/>
    <lineage>
        <taxon>Bacteria</taxon>
        <taxon>Bacillati</taxon>
        <taxon>Actinomycetota</taxon>
        <taxon>Actinomycetes</taxon>
        <taxon>Micrococcales</taxon>
        <taxon>Microbacteriaceae</taxon>
        <taxon>Leifsonia</taxon>
    </lineage>
</organism>
<accession>Q6AF47</accession>